<sequence length="184" mass="20055">MDTSLISIIIIAIALAMDAFSVSLTKGFTQKNLTKSQILYYGLFFGFFQFIMPVIGYICGTTISSFVSTVAPWIAFFLLLAIGLNMIRESLDSDDEYIMDTFSFKELTLLAVATSIDAFAVGITFALLNMSLLLPCTIIGIVAFIFSISGIFIGKKLGNYFGDKFEILGGAVLILIGIKILLGY</sequence>
<gene>
    <name evidence="1" type="primary">mntP</name>
    <name type="ordered locus">Msm_0030</name>
</gene>
<name>MNTP_METS3</name>
<dbReference type="EMBL" id="CP000678">
    <property type="protein sequence ID" value="ABQ86235.1"/>
    <property type="molecule type" value="Genomic_DNA"/>
</dbReference>
<dbReference type="RefSeq" id="WP_011953635.1">
    <property type="nucleotide sequence ID" value="NZ_CP117965.1"/>
</dbReference>
<dbReference type="STRING" id="420247.Msm_0030"/>
<dbReference type="EnsemblBacteria" id="ABQ86235">
    <property type="protein sequence ID" value="ABQ86235"/>
    <property type="gene ID" value="Msm_0030"/>
</dbReference>
<dbReference type="KEGG" id="msi:Msm_0030"/>
<dbReference type="PATRIC" id="fig|420247.28.peg.31"/>
<dbReference type="eggNOG" id="arCOG04898">
    <property type="taxonomic scope" value="Archaea"/>
</dbReference>
<dbReference type="HOGENOM" id="CLU_096410_3_0_2"/>
<dbReference type="Proteomes" id="UP000001992">
    <property type="component" value="Chromosome"/>
</dbReference>
<dbReference type="GO" id="GO:0005886">
    <property type="term" value="C:plasma membrane"/>
    <property type="evidence" value="ECO:0007669"/>
    <property type="project" value="UniProtKB-SubCell"/>
</dbReference>
<dbReference type="GO" id="GO:0005384">
    <property type="term" value="F:manganese ion transmembrane transporter activity"/>
    <property type="evidence" value="ECO:0007669"/>
    <property type="project" value="UniProtKB-UniRule"/>
</dbReference>
<dbReference type="HAMAP" id="MF_01521">
    <property type="entry name" value="MntP_pump"/>
    <property type="match status" value="1"/>
</dbReference>
<dbReference type="InterPro" id="IPR003810">
    <property type="entry name" value="Mntp/YtaF"/>
</dbReference>
<dbReference type="InterPro" id="IPR022929">
    <property type="entry name" value="Put_MntP"/>
</dbReference>
<dbReference type="PANTHER" id="PTHR35529">
    <property type="entry name" value="MANGANESE EFFLUX PUMP MNTP-RELATED"/>
    <property type="match status" value="1"/>
</dbReference>
<dbReference type="PANTHER" id="PTHR35529:SF1">
    <property type="entry name" value="MANGANESE EFFLUX PUMP MNTP-RELATED"/>
    <property type="match status" value="1"/>
</dbReference>
<dbReference type="Pfam" id="PF02659">
    <property type="entry name" value="Mntp"/>
    <property type="match status" value="1"/>
</dbReference>
<keyword id="KW-1003">Cell membrane</keyword>
<keyword id="KW-0406">Ion transport</keyword>
<keyword id="KW-0464">Manganese</keyword>
<keyword id="KW-0472">Membrane</keyword>
<keyword id="KW-0812">Transmembrane</keyword>
<keyword id="KW-1133">Transmembrane helix</keyword>
<keyword id="KW-0813">Transport</keyword>
<organism>
    <name type="scientific">Methanobrevibacter smithii (strain ATCC 35061 / DSM 861 / OCM 144 / PS)</name>
    <dbReference type="NCBI Taxonomy" id="420247"/>
    <lineage>
        <taxon>Archaea</taxon>
        <taxon>Methanobacteriati</taxon>
        <taxon>Methanobacteriota</taxon>
        <taxon>Methanomada group</taxon>
        <taxon>Methanobacteria</taxon>
        <taxon>Methanobacteriales</taxon>
        <taxon>Methanobacteriaceae</taxon>
        <taxon>Methanobrevibacter</taxon>
    </lineage>
</organism>
<protein>
    <recommendedName>
        <fullName evidence="1">Putative manganese efflux pump MntP</fullName>
    </recommendedName>
</protein>
<accession>A5UJ57</accession>
<evidence type="ECO:0000255" key="1">
    <source>
        <dbReference type="HAMAP-Rule" id="MF_01521"/>
    </source>
</evidence>
<feature type="chain" id="PRO_0000300163" description="Putative manganese efflux pump MntP">
    <location>
        <begin position="1"/>
        <end position="184"/>
    </location>
</feature>
<feature type="transmembrane region" description="Helical" evidence="1">
    <location>
        <begin position="5"/>
        <end position="25"/>
    </location>
</feature>
<feature type="transmembrane region" description="Helical" evidence="1">
    <location>
        <begin position="38"/>
        <end position="58"/>
    </location>
</feature>
<feature type="transmembrane region" description="Helical" evidence="1">
    <location>
        <begin position="67"/>
        <end position="87"/>
    </location>
</feature>
<feature type="transmembrane region" description="Helical" evidence="1">
    <location>
        <begin position="107"/>
        <end position="127"/>
    </location>
</feature>
<feature type="transmembrane region" description="Helical" evidence="1">
    <location>
        <begin position="133"/>
        <end position="153"/>
    </location>
</feature>
<feature type="transmembrane region" description="Helical" evidence="1">
    <location>
        <begin position="164"/>
        <end position="184"/>
    </location>
</feature>
<comment type="function">
    <text evidence="1">Probably functions as a manganese efflux pump.</text>
</comment>
<comment type="subcellular location">
    <subcellularLocation>
        <location evidence="1">Cell membrane</location>
        <topology evidence="1">Multi-pass membrane protein</topology>
    </subcellularLocation>
</comment>
<comment type="similarity">
    <text evidence="1">Belongs to the MntP (TC 9.B.29) family.</text>
</comment>
<reference key="1">
    <citation type="journal article" date="2007" name="Proc. Natl. Acad. Sci. U.S.A.">
        <title>Genomic and metabolic adaptations of Methanobrevibacter smithii to the human gut.</title>
        <authorList>
            <person name="Samuel B.S."/>
            <person name="Hansen E.E."/>
            <person name="Manchester J.K."/>
            <person name="Coutinho P.M."/>
            <person name="Henrissat B."/>
            <person name="Fulton R."/>
            <person name="Latreille P."/>
            <person name="Kim K."/>
            <person name="Wilson R.K."/>
            <person name="Gordon J.I."/>
        </authorList>
    </citation>
    <scope>NUCLEOTIDE SEQUENCE [LARGE SCALE GENOMIC DNA]</scope>
    <source>
        <strain>ATCC 35061 / DSM 861 / OCM 144 / PS</strain>
    </source>
</reference>
<proteinExistence type="inferred from homology"/>